<evidence type="ECO:0000255" key="1">
    <source>
        <dbReference type="HAMAP-Rule" id="MF_01043"/>
    </source>
</evidence>
<comment type="function">
    <text evidence="1">Catalyzes the transfer of an acyl group from acyl-phosphate (acyl-PO(4)) to glycerol-3-phosphate (G3P) to form lysophosphatidic acid (LPA). This enzyme utilizes acyl-phosphate as fatty acyl donor, but not acyl-CoA or acyl-ACP.</text>
</comment>
<comment type="catalytic activity">
    <reaction evidence="1">
        <text>an acyl phosphate + sn-glycerol 3-phosphate = a 1-acyl-sn-glycero-3-phosphate + phosphate</text>
        <dbReference type="Rhea" id="RHEA:34075"/>
        <dbReference type="ChEBI" id="CHEBI:43474"/>
        <dbReference type="ChEBI" id="CHEBI:57597"/>
        <dbReference type="ChEBI" id="CHEBI:57970"/>
        <dbReference type="ChEBI" id="CHEBI:59918"/>
        <dbReference type="EC" id="2.3.1.275"/>
    </reaction>
</comment>
<comment type="pathway">
    <text evidence="1">Lipid metabolism; phospholipid metabolism.</text>
</comment>
<comment type="subunit">
    <text evidence="1">Probably interacts with PlsX.</text>
</comment>
<comment type="subcellular location">
    <subcellularLocation>
        <location evidence="1">Cell inner membrane</location>
        <topology evidence="1">Multi-pass membrane protein</topology>
    </subcellularLocation>
</comment>
<comment type="similarity">
    <text evidence="1">Belongs to the PlsY family.</text>
</comment>
<keyword id="KW-0997">Cell inner membrane</keyword>
<keyword id="KW-1003">Cell membrane</keyword>
<keyword id="KW-0444">Lipid biosynthesis</keyword>
<keyword id="KW-0443">Lipid metabolism</keyword>
<keyword id="KW-0472">Membrane</keyword>
<keyword id="KW-0594">Phospholipid biosynthesis</keyword>
<keyword id="KW-1208">Phospholipid metabolism</keyword>
<keyword id="KW-1185">Reference proteome</keyword>
<keyword id="KW-0808">Transferase</keyword>
<keyword id="KW-0812">Transmembrane</keyword>
<keyword id="KW-1133">Transmembrane helix</keyword>
<dbReference type="EC" id="2.3.1.275" evidence="1"/>
<dbReference type="EMBL" id="CP001616">
    <property type="protein sequence ID" value="ACQ94261.1"/>
    <property type="molecule type" value="Genomic_DNA"/>
</dbReference>
<dbReference type="RefSeq" id="WP_015879710.1">
    <property type="nucleotide sequence ID" value="NC_012691.1"/>
</dbReference>
<dbReference type="SMR" id="C4LB58"/>
<dbReference type="STRING" id="595494.Tola_2667"/>
<dbReference type="KEGG" id="tau:Tola_2667"/>
<dbReference type="eggNOG" id="COG0344">
    <property type="taxonomic scope" value="Bacteria"/>
</dbReference>
<dbReference type="HOGENOM" id="CLU_081254_0_2_6"/>
<dbReference type="OrthoDB" id="9777124at2"/>
<dbReference type="UniPathway" id="UPA00085"/>
<dbReference type="Proteomes" id="UP000009073">
    <property type="component" value="Chromosome"/>
</dbReference>
<dbReference type="GO" id="GO:0005886">
    <property type="term" value="C:plasma membrane"/>
    <property type="evidence" value="ECO:0007669"/>
    <property type="project" value="UniProtKB-SubCell"/>
</dbReference>
<dbReference type="GO" id="GO:0043772">
    <property type="term" value="F:acyl-phosphate glycerol-3-phosphate acyltransferase activity"/>
    <property type="evidence" value="ECO:0007669"/>
    <property type="project" value="UniProtKB-UniRule"/>
</dbReference>
<dbReference type="GO" id="GO:0008654">
    <property type="term" value="P:phospholipid biosynthetic process"/>
    <property type="evidence" value="ECO:0007669"/>
    <property type="project" value="UniProtKB-UniRule"/>
</dbReference>
<dbReference type="HAMAP" id="MF_01043">
    <property type="entry name" value="PlsY"/>
    <property type="match status" value="1"/>
</dbReference>
<dbReference type="InterPro" id="IPR003811">
    <property type="entry name" value="G3P_acylTferase_PlsY"/>
</dbReference>
<dbReference type="NCBIfam" id="TIGR00023">
    <property type="entry name" value="glycerol-3-phosphate 1-O-acyltransferase PlsY"/>
    <property type="match status" value="1"/>
</dbReference>
<dbReference type="PANTHER" id="PTHR30309:SF0">
    <property type="entry name" value="GLYCEROL-3-PHOSPHATE ACYLTRANSFERASE-RELATED"/>
    <property type="match status" value="1"/>
</dbReference>
<dbReference type="PANTHER" id="PTHR30309">
    <property type="entry name" value="INNER MEMBRANE PROTEIN YGIH"/>
    <property type="match status" value="1"/>
</dbReference>
<dbReference type="Pfam" id="PF02660">
    <property type="entry name" value="G3P_acyltransf"/>
    <property type="match status" value="1"/>
</dbReference>
<dbReference type="SMART" id="SM01207">
    <property type="entry name" value="G3P_acyltransf"/>
    <property type="match status" value="1"/>
</dbReference>
<name>PLSY_TOLAT</name>
<accession>C4LB58</accession>
<gene>
    <name evidence="1" type="primary">plsY</name>
    <name type="ordered locus">Tola_2667</name>
</gene>
<organism>
    <name type="scientific">Tolumonas auensis (strain DSM 9187 / NBRC 110442 / TA 4)</name>
    <dbReference type="NCBI Taxonomy" id="595494"/>
    <lineage>
        <taxon>Bacteria</taxon>
        <taxon>Pseudomonadati</taxon>
        <taxon>Pseudomonadota</taxon>
        <taxon>Gammaproteobacteria</taxon>
        <taxon>Aeromonadales</taxon>
        <taxon>Aeromonadaceae</taxon>
        <taxon>Tolumonas</taxon>
    </lineage>
</organism>
<sequence length="203" mass="22307">MLALTFAMSGIAYLLGSVSNAVLISRLCDLPDPREYGSHNPGATNVLRSGNRLAALIVFLLDMLKGTIPVYLAWYLGIPPLYLGFIGIAACLGHMYPLYFHFRGGKGVATALGALLPLGLDMGSFMIVTWLIVLLFTGYSSLAAIGAALLAPLYTYCLKPEYTLPVAMLCCLIILRHHENISRLLQGHEPQVWSRHPLKRHRR</sequence>
<feature type="chain" id="PRO_1000213417" description="Glycerol-3-phosphate acyltransferase">
    <location>
        <begin position="1"/>
        <end position="203"/>
    </location>
</feature>
<feature type="transmembrane region" description="Helical" evidence="1">
    <location>
        <begin position="4"/>
        <end position="24"/>
    </location>
</feature>
<feature type="transmembrane region" description="Helical" evidence="1">
    <location>
        <begin position="68"/>
        <end position="88"/>
    </location>
</feature>
<feature type="transmembrane region" description="Helical" evidence="1">
    <location>
        <begin position="104"/>
        <end position="124"/>
    </location>
</feature>
<feature type="transmembrane region" description="Helical" evidence="1">
    <location>
        <begin position="125"/>
        <end position="145"/>
    </location>
</feature>
<proteinExistence type="inferred from homology"/>
<reference key="1">
    <citation type="submission" date="2009-05" db="EMBL/GenBank/DDBJ databases">
        <title>Complete sequence of Tolumonas auensis DSM 9187.</title>
        <authorList>
            <consortium name="US DOE Joint Genome Institute"/>
            <person name="Lucas S."/>
            <person name="Copeland A."/>
            <person name="Lapidus A."/>
            <person name="Glavina del Rio T."/>
            <person name="Tice H."/>
            <person name="Bruce D."/>
            <person name="Goodwin L."/>
            <person name="Pitluck S."/>
            <person name="Chertkov O."/>
            <person name="Brettin T."/>
            <person name="Detter J.C."/>
            <person name="Han C."/>
            <person name="Larimer F."/>
            <person name="Land M."/>
            <person name="Hauser L."/>
            <person name="Kyrpides N."/>
            <person name="Mikhailova N."/>
            <person name="Spring S."/>
            <person name="Beller H."/>
        </authorList>
    </citation>
    <scope>NUCLEOTIDE SEQUENCE [LARGE SCALE GENOMIC DNA]</scope>
    <source>
        <strain>DSM 9187 / NBRC 110442 / TA 4</strain>
    </source>
</reference>
<protein>
    <recommendedName>
        <fullName evidence="1">Glycerol-3-phosphate acyltransferase</fullName>
    </recommendedName>
    <alternativeName>
        <fullName evidence="1">Acyl-PO4 G3P acyltransferase</fullName>
    </alternativeName>
    <alternativeName>
        <fullName evidence="1">Acyl-phosphate--glycerol-3-phosphate acyltransferase</fullName>
    </alternativeName>
    <alternativeName>
        <fullName evidence="1">G3P acyltransferase</fullName>
        <shortName evidence="1">GPAT</shortName>
        <ecNumber evidence="1">2.3.1.275</ecNumber>
    </alternativeName>
    <alternativeName>
        <fullName evidence="1">Lysophosphatidic acid synthase</fullName>
        <shortName evidence="1">LPA synthase</shortName>
    </alternativeName>
</protein>